<dbReference type="EMBL" id="FO080278">
    <property type="protein sequence ID" value="CCD62547.1"/>
    <property type="molecule type" value="Genomic_DNA"/>
</dbReference>
<dbReference type="PIR" id="S44902">
    <property type="entry name" value="S44902"/>
</dbReference>
<dbReference type="RefSeq" id="NP_498706.1">
    <property type="nucleotide sequence ID" value="NM_066305.6"/>
</dbReference>
<dbReference type="SMR" id="P34660"/>
<dbReference type="BioGRID" id="41309">
    <property type="interactions" value="1"/>
</dbReference>
<dbReference type="FunCoup" id="P34660">
    <property type="interactions" value="996"/>
</dbReference>
<dbReference type="IntAct" id="P34660">
    <property type="interactions" value="1"/>
</dbReference>
<dbReference type="STRING" id="6239.ZK652.2.1"/>
<dbReference type="PaxDb" id="6239-ZK652.2"/>
<dbReference type="PeptideAtlas" id="P34660"/>
<dbReference type="EnsemblMetazoa" id="ZK652.2.1">
    <property type="protein sequence ID" value="ZK652.2.1"/>
    <property type="gene ID" value="WBGene00022783"/>
</dbReference>
<dbReference type="GeneID" id="176101"/>
<dbReference type="KEGG" id="cel:CELE_ZK652.2"/>
<dbReference type="UCSC" id="ZK652.2">
    <property type="organism name" value="c. elegans"/>
</dbReference>
<dbReference type="AGR" id="WB:WBGene00022783"/>
<dbReference type="CTD" id="176101"/>
<dbReference type="WormBase" id="ZK652.2">
    <property type="protein sequence ID" value="CE00448"/>
    <property type="gene ID" value="WBGene00022783"/>
    <property type="gene designation" value="tomm-7"/>
</dbReference>
<dbReference type="eggNOG" id="KOG4449">
    <property type="taxonomic scope" value="Eukaryota"/>
</dbReference>
<dbReference type="HOGENOM" id="CLU_173610_2_0_1"/>
<dbReference type="InParanoid" id="P34660"/>
<dbReference type="OMA" id="FRIFVQW"/>
<dbReference type="OrthoDB" id="284357at2759"/>
<dbReference type="PhylomeDB" id="P34660"/>
<dbReference type="PRO" id="PR:P34660"/>
<dbReference type="Proteomes" id="UP000001940">
    <property type="component" value="Chromosome III"/>
</dbReference>
<dbReference type="Bgee" id="WBGene00022783">
    <property type="expression patterns" value="Expressed in adult organism and 3 other cell types or tissues"/>
</dbReference>
<dbReference type="GO" id="GO:0005742">
    <property type="term" value="C:mitochondrial outer membrane translocase complex"/>
    <property type="evidence" value="ECO:0000318"/>
    <property type="project" value="GO_Central"/>
</dbReference>
<dbReference type="GO" id="GO:0007005">
    <property type="term" value="P:mitochondrion organization"/>
    <property type="evidence" value="ECO:0000315"/>
    <property type="project" value="WormBase"/>
</dbReference>
<dbReference type="GO" id="GO:1903955">
    <property type="term" value="P:positive regulation of protein targeting to mitochondrion"/>
    <property type="evidence" value="ECO:0000318"/>
    <property type="project" value="GO_Central"/>
</dbReference>
<dbReference type="GO" id="GO:0030150">
    <property type="term" value="P:protein import into mitochondrial matrix"/>
    <property type="evidence" value="ECO:0007669"/>
    <property type="project" value="InterPro"/>
</dbReference>
<dbReference type="InterPro" id="IPR012621">
    <property type="entry name" value="Tom7"/>
</dbReference>
<dbReference type="PANTHER" id="PTHR46722">
    <property type="entry name" value="MITOCHONDRIAL IMPORT RECEPTOR SUBUNIT TOM7 HOMOLOG"/>
    <property type="match status" value="1"/>
</dbReference>
<dbReference type="PANTHER" id="PTHR46722:SF1">
    <property type="entry name" value="MITOCHONDRIAL IMPORT RECEPTOR SUBUNIT TOM7 HOMOLOG"/>
    <property type="match status" value="1"/>
</dbReference>
<dbReference type="Pfam" id="PF08038">
    <property type="entry name" value="Tom7"/>
    <property type="match status" value="1"/>
</dbReference>
<protein>
    <recommendedName>
        <fullName>Mitochondrial import receptor subunit TOM7 homolog</fullName>
    </recommendedName>
    <alternativeName>
        <fullName>Translocase of outer membrane 7 kDa subunit homolog</fullName>
    </alternativeName>
</protein>
<accession>P34660</accession>
<gene>
    <name type="primary">tomm-7</name>
    <name type="ORF">ZK652.2</name>
</gene>
<comment type="subunit">
    <text evidence="1">Forms part of the preprotein translocase complex of the outer mitochondrial membrane (TOM complex).</text>
</comment>
<comment type="subcellular location">
    <subcellularLocation>
        <location evidence="1">Mitochondrion outer membrane</location>
        <topology evidence="1">Single-pass membrane protein</topology>
    </subcellularLocation>
</comment>
<comment type="similarity">
    <text evidence="3">Belongs to the Tom7 family.</text>
</comment>
<reference key="1">
    <citation type="journal article" date="1994" name="Nature">
        <title>2.2 Mb of contiguous nucleotide sequence from chromosome III of C. elegans.</title>
        <authorList>
            <person name="Wilson R."/>
            <person name="Ainscough R."/>
            <person name="Anderson K."/>
            <person name="Baynes C."/>
            <person name="Berks M."/>
            <person name="Bonfield J."/>
            <person name="Burton J."/>
            <person name="Connell M."/>
            <person name="Copsey T."/>
            <person name="Cooper J."/>
            <person name="Coulson A."/>
            <person name="Craxton M."/>
            <person name="Dear S."/>
            <person name="Du Z."/>
            <person name="Durbin R."/>
            <person name="Favello A."/>
            <person name="Fraser A."/>
            <person name="Fulton L."/>
            <person name="Gardner A."/>
            <person name="Green P."/>
            <person name="Hawkins T."/>
            <person name="Hillier L."/>
            <person name="Jier M."/>
            <person name="Johnston L."/>
            <person name="Jones M."/>
            <person name="Kershaw J."/>
            <person name="Kirsten J."/>
            <person name="Laisster N."/>
            <person name="Latreille P."/>
            <person name="Lightning J."/>
            <person name="Lloyd C."/>
            <person name="Mortimore B."/>
            <person name="O'Callaghan M."/>
            <person name="Parsons J."/>
            <person name="Percy C."/>
            <person name="Rifken L."/>
            <person name="Roopra A."/>
            <person name="Saunders D."/>
            <person name="Shownkeen R."/>
            <person name="Sims M."/>
            <person name="Smaldon N."/>
            <person name="Smith A."/>
            <person name="Smith M."/>
            <person name="Sonnhammer E."/>
            <person name="Staden R."/>
            <person name="Sulston J."/>
            <person name="Thierry-Mieg J."/>
            <person name="Thomas K."/>
            <person name="Vaudin M."/>
            <person name="Vaughan K."/>
            <person name="Waterston R."/>
            <person name="Watson A."/>
            <person name="Weinstock L."/>
            <person name="Wilkinson-Sproat J."/>
            <person name="Wohldman P."/>
        </authorList>
    </citation>
    <scope>NUCLEOTIDE SEQUENCE [LARGE SCALE GENOMIC DNA]</scope>
    <source>
        <strain>Bristol N2</strain>
    </source>
</reference>
<reference key="2">
    <citation type="journal article" date="1998" name="Science">
        <title>Genome sequence of the nematode C. elegans: a platform for investigating biology.</title>
        <authorList>
            <consortium name="The C. elegans sequencing consortium"/>
        </authorList>
    </citation>
    <scope>NUCLEOTIDE SEQUENCE [LARGE SCALE GENOMIC DNA]</scope>
    <source>
        <strain>Bristol N2</strain>
    </source>
</reference>
<proteinExistence type="inferred from homology"/>
<evidence type="ECO:0000250" key="1"/>
<evidence type="ECO:0000255" key="2"/>
<evidence type="ECO:0000305" key="3"/>
<keyword id="KW-0472">Membrane</keyword>
<keyword id="KW-0496">Mitochondrion</keyword>
<keyword id="KW-1000">Mitochondrion outer membrane</keyword>
<keyword id="KW-0653">Protein transport</keyword>
<keyword id="KW-1185">Reference proteome</keyword>
<keyword id="KW-0812">Transmembrane</keyword>
<keyword id="KW-1133">Transmembrane helix</keyword>
<keyword id="KW-0813">Transport</keyword>
<feature type="chain" id="PRO_0000046761" description="Mitochondrial import receptor subunit TOM7 homolog">
    <location>
        <begin position="1"/>
        <end position="58"/>
    </location>
</feature>
<feature type="topological domain" description="Cytoplasmic" evidence="1">
    <location>
        <begin position="1"/>
        <end position="16"/>
    </location>
</feature>
<feature type="transmembrane region" description="Helical" evidence="2">
    <location>
        <begin position="17"/>
        <end position="35"/>
    </location>
</feature>
<feature type="topological domain" description="Mitochondrial intermembrane" evidence="1">
    <location>
        <begin position="36"/>
        <end position="58"/>
    </location>
</feature>
<organism>
    <name type="scientific">Caenorhabditis elegans</name>
    <dbReference type="NCBI Taxonomy" id="6239"/>
    <lineage>
        <taxon>Eukaryota</taxon>
        <taxon>Metazoa</taxon>
        <taxon>Ecdysozoa</taxon>
        <taxon>Nematoda</taxon>
        <taxon>Chromadorea</taxon>
        <taxon>Rhabditida</taxon>
        <taxon>Rhabditina</taxon>
        <taxon>Rhabditomorpha</taxon>
        <taxon>Rhabditoidea</taxon>
        <taxon>Rhabditidae</taxon>
        <taxon>Peloderinae</taxon>
        <taxon>Caenorhabditis</taxon>
    </lineage>
</organism>
<sequence length="58" mass="6318">MKLSPATKSFIGKTVDISTFAIQWGFVPFVVYLGFKKGAEPMPNGQILPLSAMSLLWG</sequence>
<name>TOM7_CAEEL</name>